<gene>
    <name type="primary">mopA</name>
</gene>
<organism>
    <name type="scientific">Rhodobacter capsulatus</name>
    <name type="common">Rhodopseudomonas capsulata</name>
    <dbReference type="NCBI Taxonomy" id="1061"/>
    <lineage>
        <taxon>Bacteria</taxon>
        <taxon>Pseudomonadati</taxon>
        <taxon>Pseudomonadota</taxon>
        <taxon>Alphaproteobacteria</taxon>
        <taxon>Rhodobacterales</taxon>
        <taxon>Rhodobacter group</taxon>
        <taxon>Rhodobacter</taxon>
    </lineage>
</organism>
<keyword id="KW-0500">Molybdenum</keyword>
<keyword id="KW-0677">Repeat</keyword>
<keyword id="KW-0813">Transport</keyword>
<evidence type="ECO:0000255" key="1">
    <source>
        <dbReference type="PROSITE-ProRule" id="PRU01213"/>
    </source>
</evidence>
<evidence type="ECO:0000305" key="2"/>
<proteinExistence type="evidence at protein level"/>
<protein>
    <recommendedName>
        <fullName>Molybdenum-pterin-binding protein MopA</fullName>
    </recommendedName>
</protein>
<accession>Q08385</accession>
<reference key="1">
    <citation type="journal article" date="1993" name="J. Bacteriol.">
        <title>Characterization of Rhodobacter capsulatus genes encoding a molybdenum transport system and putative molybdenum-pterin-binding proteins.</title>
        <authorList>
            <person name="Wang G."/>
            <person name="Angermueller S."/>
            <person name="Klipp W."/>
        </authorList>
    </citation>
    <scope>NUCLEOTIDE SEQUENCE [GENOMIC DNA]</scope>
    <source>
        <strain>ATCC 33303 / B10</strain>
    </source>
</reference>
<dbReference type="EMBL" id="L06254">
    <property type="protein sequence ID" value="AAA71912.1"/>
    <property type="molecule type" value="Unassigned_DNA"/>
</dbReference>
<dbReference type="PIR" id="F36914">
    <property type="entry name" value="F36914"/>
</dbReference>
<dbReference type="RefSeq" id="WP_013066305.1">
    <property type="nucleotide sequence ID" value="NZ_VIBE01000004.1"/>
</dbReference>
<dbReference type="SMR" id="Q08385"/>
<dbReference type="IntAct" id="Q08385">
    <property type="interactions" value="2"/>
</dbReference>
<dbReference type="GeneID" id="31489512"/>
<dbReference type="OMA" id="QITHDST"/>
<dbReference type="GO" id="GO:0003700">
    <property type="term" value="F:DNA-binding transcription factor activity"/>
    <property type="evidence" value="ECO:0007669"/>
    <property type="project" value="InterPro"/>
</dbReference>
<dbReference type="GO" id="GO:0042802">
    <property type="term" value="F:identical protein binding"/>
    <property type="evidence" value="ECO:0000353"/>
    <property type="project" value="IntAct"/>
</dbReference>
<dbReference type="GO" id="GO:0030151">
    <property type="term" value="F:molybdenum ion binding"/>
    <property type="evidence" value="ECO:0007669"/>
    <property type="project" value="InterPro"/>
</dbReference>
<dbReference type="GO" id="GO:0015689">
    <property type="term" value="P:molybdate ion transport"/>
    <property type="evidence" value="ECO:0007669"/>
    <property type="project" value="InterPro"/>
</dbReference>
<dbReference type="FunFam" id="1.10.10.10:FF:001144">
    <property type="entry name" value="Molybdenum transport operon repressor MopA"/>
    <property type="match status" value="1"/>
</dbReference>
<dbReference type="FunFam" id="2.40.50.100:FF:000086">
    <property type="entry name" value="Molybdenum transport operon repressor MopB"/>
    <property type="match status" value="2"/>
</dbReference>
<dbReference type="Gene3D" id="2.40.50.100">
    <property type="match status" value="2"/>
</dbReference>
<dbReference type="Gene3D" id="1.10.10.10">
    <property type="entry name" value="Winged helix-like DNA-binding domain superfamily/Winged helix DNA-binding domain"/>
    <property type="match status" value="1"/>
</dbReference>
<dbReference type="InterPro" id="IPR008995">
    <property type="entry name" value="Mo/tungstate-bd_C_term_dom"/>
</dbReference>
<dbReference type="InterPro" id="IPR016462">
    <property type="entry name" value="ModE"/>
</dbReference>
<dbReference type="InterPro" id="IPR003725">
    <property type="entry name" value="ModE-bd_N"/>
</dbReference>
<dbReference type="InterPro" id="IPR051815">
    <property type="entry name" value="Molybdate_resp_trans_reg"/>
</dbReference>
<dbReference type="InterPro" id="IPR004606">
    <property type="entry name" value="Mop_domain"/>
</dbReference>
<dbReference type="InterPro" id="IPR005116">
    <property type="entry name" value="Transp-assoc_OB_typ1"/>
</dbReference>
<dbReference type="InterPro" id="IPR000847">
    <property type="entry name" value="Tscrpt_reg_HTH_LysR"/>
</dbReference>
<dbReference type="InterPro" id="IPR036388">
    <property type="entry name" value="WH-like_DNA-bd_sf"/>
</dbReference>
<dbReference type="InterPro" id="IPR036390">
    <property type="entry name" value="WH_DNA-bd_sf"/>
</dbReference>
<dbReference type="NCBIfam" id="TIGR00637">
    <property type="entry name" value="ModE_repress"/>
    <property type="match status" value="1"/>
</dbReference>
<dbReference type="NCBIfam" id="TIGR00638">
    <property type="entry name" value="Mop"/>
    <property type="match status" value="2"/>
</dbReference>
<dbReference type="PANTHER" id="PTHR30432:SF1">
    <property type="entry name" value="DNA-BINDING TRANSCRIPTIONAL DUAL REGULATOR MODE"/>
    <property type="match status" value="1"/>
</dbReference>
<dbReference type="PANTHER" id="PTHR30432">
    <property type="entry name" value="TRANSCRIPTIONAL REGULATOR MODE"/>
    <property type="match status" value="1"/>
</dbReference>
<dbReference type="Pfam" id="PF00126">
    <property type="entry name" value="HTH_1"/>
    <property type="match status" value="1"/>
</dbReference>
<dbReference type="Pfam" id="PF03459">
    <property type="entry name" value="TOBE"/>
    <property type="match status" value="2"/>
</dbReference>
<dbReference type="PIRSF" id="PIRSF005763">
    <property type="entry name" value="Txn_reg_ModE"/>
    <property type="match status" value="1"/>
</dbReference>
<dbReference type="SUPFAM" id="SSF50331">
    <property type="entry name" value="MOP-like"/>
    <property type="match status" value="2"/>
</dbReference>
<dbReference type="SUPFAM" id="SSF46785">
    <property type="entry name" value="Winged helix' DNA-binding domain"/>
    <property type="match status" value="1"/>
</dbReference>
<dbReference type="PROSITE" id="PS51866">
    <property type="entry name" value="MOP"/>
    <property type="match status" value="2"/>
</dbReference>
<name>MOPA_RHOCA</name>
<comment type="interaction">
    <interactant intactId="EBI-6407908">
        <id>Q08385</id>
    </interactant>
    <interactant intactId="EBI-6407908">
        <id>Q08385</id>
        <label>mopA</label>
    </interactant>
    <organismsDiffer>false</organismsDiffer>
    <experiments>5</experiments>
</comment>
<comment type="interaction">
    <interactant intactId="EBI-6407908">
        <id>Q08385</id>
    </interactant>
    <interactant intactId="EBI-6407928">
        <id>Q08386</id>
        <label>mopB</label>
    </interactant>
    <organismsDiffer>false</organismsDiffer>
    <experiments>4</experiments>
</comment>
<comment type="similarity">
    <text evidence="2">Belongs to the ModE family.</text>
</comment>
<sequence length="265" mass="27119">MNEQPLIAALSLQRAGAPRVGGDRIRLLEAIARHGTIAGAAREVGLSYKTAWDAVGTLNNLFEQPLVEAAPGGRTGGNARVTEAGQALIAGFGLLEGALTKALGVLEGGVSAPEKALNTLWSLTMRTSNRNTLRCTVTRVTLGAVNAEVELALTDGHSLTAVITERSATEMGLAPGVEVFALIKASFVMLAAGGDPGRISACNRLTGIVAARTDGPVNTEIILDLGNCKSITAVITHTSADALGLAPGVPATALFKASHVILAMP</sequence>
<feature type="chain" id="PRO_0000201132" description="Molybdenum-pterin-binding protein MopA">
    <location>
        <begin position="1"/>
        <end position="265"/>
    </location>
</feature>
<feature type="domain" description="Mop 1" evidence="1">
    <location>
        <begin position="126"/>
        <end position="192"/>
    </location>
</feature>
<feature type="domain" description="Mop 2" evidence="1">
    <location>
        <begin position="198"/>
        <end position="264"/>
    </location>
</feature>